<gene>
    <name type="ordered locus">NGK_2660</name>
</gene>
<sequence>MNFLLSKLLLGLIRFYQYCISPLIPPRCRYTPTCSQYAVEAVKKYGAFKGLRLAIKRIARCHPFGGHGHDPVP</sequence>
<dbReference type="EMBL" id="CP001050">
    <property type="protein sequence ID" value="ACF31259.1"/>
    <property type="molecule type" value="Genomic_DNA"/>
</dbReference>
<dbReference type="KEGG" id="ngk:NGK_2660"/>
<dbReference type="HOGENOM" id="CLU_144811_6_1_4"/>
<dbReference type="Proteomes" id="UP000002564">
    <property type="component" value="Chromosome"/>
</dbReference>
<dbReference type="GO" id="GO:0005886">
    <property type="term" value="C:plasma membrane"/>
    <property type="evidence" value="ECO:0007669"/>
    <property type="project" value="UniProtKB-SubCell"/>
</dbReference>
<dbReference type="HAMAP" id="MF_00386">
    <property type="entry name" value="UPF0161_YidD"/>
    <property type="match status" value="1"/>
</dbReference>
<dbReference type="InterPro" id="IPR002696">
    <property type="entry name" value="Membr_insert_effic_factor_YidD"/>
</dbReference>
<dbReference type="NCBIfam" id="TIGR00278">
    <property type="entry name" value="membrane protein insertion efficiency factor YidD"/>
    <property type="match status" value="1"/>
</dbReference>
<dbReference type="PANTHER" id="PTHR33383">
    <property type="entry name" value="MEMBRANE PROTEIN INSERTION EFFICIENCY FACTOR-RELATED"/>
    <property type="match status" value="1"/>
</dbReference>
<dbReference type="PANTHER" id="PTHR33383:SF1">
    <property type="entry name" value="MEMBRANE PROTEIN INSERTION EFFICIENCY FACTOR-RELATED"/>
    <property type="match status" value="1"/>
</dbReference>
<dbReference type="Pfam" id="PF01809">
    <property type="entry name" value="YidD"/>
    <property type="match status" value="1"/>
</dbReference>
<dbReference type="SMART" id="SM01234">
    <property type="entry name" value="Haemolytic"/>
    <property type="match status" value="1"/>
</dbReference>
<keyword id="KW-0997">Cell inner membrane</keyword>
<keyword id="KW-1003">Cell membrane</keyword>
<keyword id="KW-0472">Membrane</keyword>
<reference key="1">
    <citation type="journal article" date="2008" name="J. Bacteriol.">
        <title>Complete genome sequence of Neisseria gonorrhoeae NCCP11945.</title>
        <authorList>
            <person name="Chung G.T."/>
            <person name="Yoo J.S."/>
            <person name="Oh H.B."/>
            <person name="Lee Y.S."/>
            <person name="Cha S.H."/>
            <person name="Kim S.J."/>
            <person name="Yoo C.K."/>
        </authorList>
    </citation>
    <scope>NUCLEOTIDE SEQUENCE [LARGE SCALE GENOMIC DNA]</scope>
    <source>
        <strain>NCCP11945</strain>
    </source>
</reference>
<name>YIDD_NEIG2</name>
<accession>B4RJJ4</accession>
<feature type="chain" id="PRO_1000197766" description="Putative membrane protein insertion efficiency factor">
    <location>
        <begin position="1"/>
        <end position="73"/>
    </location>
</feature>
<organism>
    <name type="scientific">Neisseria gonorrhoeae (strain NCCP11945)</name>
    <dbReference type="NCBI Taxonomy" id="521006"/>
    <lineage>
        <taxon>Bacteria</taxon>
        <taxon>Pseudomonadati</taxon>
        <taxon>Pseudomonadota</taxon>
        <taxon>Betaproteobacteria</taxon>
        <taxon>Neisseriales</taxon>
        <taxon>Neisseriaceae</taxon>
        <taxon>Neisseria</taxon>
    </lineage>
</organism>
<proteinExistence type="inferred from homology"/>
<protein>
    <recommendedName>
        <fullName evidence="1">Putative membrane protein insertion efficiency factor</fullName>
    </recommendedName>
</protein>
<comment type="function">
    <text evidence="1">Could be involved in insertion of integral membrane proteins into the membrane.</text>
</comment>
<comment type="subcellular location">
    <subcellularLocation>
        <location evidence="1">Cell inner membrane</location>
        <topology evidence="1">Peripheral membrane protein</topology>
        <orientation evidence="1">Cytoplasmic side</orientation>
    </subcellularLocation>
</comment>
<comment type="similarity">
    <text evidence="1">Belongs to the UPF0161 family.</text>
</comment>
<evidence type="ECO:0000255" key="1">
    <source>
        <dbReference type="HAMAP-Rule" id="MF_00386"/>
    </source>
</evidence>